<proteinExistence type="evidence at protein level"/>
<dbReference type="PIR" id="S04941">
    <property type="entry name" value="S04941"/>
</dbReference>
<dbReference type="PIR" id="S10544">
    <property type="entry name" value="S10544"/>
</dbReference>
<dbReference type="PIR" id="S10545">
    <property type="entry name" value="S10545"/>
</dbReference>
<dbReference type="GO" id="GO:0000786">
    <property type="term" value="C:nucleosome"/>
    <property type="evidence" value="ECO:0007669"/>
    <property type="project" value="UniProtKB-KW"/>
</dbReference>
<dbReference type="GO" id="GO:0005634">
    <property type="term" value="C:nucleus"/>
    <property type="evidence" value="ECO:0007669"/>
    <property type="project" value="UniProtKB-SubCell"/>
</dbReference>
<dbReference type="GO" id="GO:0003677">
    <property type="term" value="F:DNA binding"/>
    <property type="evidence" value="ECO:0007669"/>
    <property type="project" value="UniProtKB-KW"/>
</dbReference>
<dbReference type="GO" id="GO:0030154">
    <property type="term" value="P:cell differentiation"/>
    <property type="evidence" value="ECO:0007669"/>
    <property type="project" value="UniProtKB-KW"/>
</dbReference>
<dbReference type="GO" id="GO:0007283">
    <property type="term" value="P:spermatogenesis"/>
    <property type="evidence" value="ECO:0007669"/>
    <property type="project" value="UniProtKB-KW"/>
</dbReference>
<comment type="function">
    <text>Involved in nuclear basic protein transition: histones are replaced by spermatid specific proteins which are themselves replaced by protamines in late spermatids.</text>
</comment>
<comment type="subcellular location">
    <subcellularLocation>
        <location>Nucleus</location>
    </subcellularLocation>
    <subcellularLocation>
        <location>Chromosome</location>
    </subcellularLocation>
</comment>
<comment type="miscellaneous">
    <text>The sequence of component I is shown.</text>
</comment>
<keyword id="KW-0158">Chromosome</keyword>
<keyword id="KW-0217">Developmental protein</keyword>
<keyword id="KW-0221">Differentiation</keyword>
<keyword id="KW-0903">Direct protein sequencing</keyword>
<keyword id="KW-0238">DNA-binding</keyword>
<keyword id="KW-0544">Nucleosome core</keyword>
<keyword id="KW-0539">Nucleus</keyword>
<keyword id="KW-0744">Spermatogenesis</keyword>
<accession>P11860</accession>
<evidence type="ECO:0000256" key="1">
    <source>
        <dbReference type="SAM" id="MobiDB-lite"/>
    </source>
</evidence>
<protein>
    <recommendedName>
        <fullName>Sperm-specific protein Phi-3</fullName>
    </recommendedName>
    <alternativeName>
        <fullName>PL-IV</fullName>
    </alternativeName>
</protein>
<sequence length="45" mass="4912">AKAKRSPRKKKAAVKKSSKSKAKKPKSPKKKKAAKKPAKKAAKKK</sequence>
<name>PHI3_MYTCA</name>
<reference key="1">
    <citation type="journal article" date="1989" name="Eur. J. Biochem.">
        <title>Sequence and characterization of the sperm-specific protein phi 3 from Mytilus californianus.</title>
        <authorList>
            <person name="Ausio J."/>
            <person name="McParland R."/>
        </authorList>
    </citation>
    <scope>PROTEIN SEQUENCE</scope>
</reference>
<organism>
    <name type="scientific">Mytilus californianus</name>
    <name type="common">California mussel</name>
    <dbReference type="NCBI Taxonomy" id="6549"/>
    <lineage>
        <taxon>Eukaryota</taxon>
        <taxon>Metazoa</taxon>
        <taxon>Spiralia</taxon>
        <taxon>Lophotrochozoa</taxon>
        <taxon>Mollusca</taxon>
        <taxon>Bivalvia</taxon>
        <taxon>Autobranchia</taxon>
        <taxon>Pteriomorphia</taxon>
        <taxon>Mytilida</taxon>
        <taxon>Mytiloidea</taxon>
        <taxon>Mytilidae</taxon>
        <taxon>Mytilinae</taxon>
        <taxon>Mytilus</taxon>
    </lineage>
</organism>
<feature type="chain" id="PRO_0000106637" description="Sperm-specific protein Phi-3">
    <location>
        <begin position="1"/>
        <end position="45"/>
    </location>
</feature>
<feature type="region of interest" description="Disordered" evidence="1">
    <location>
        <begin position="1"/>
        <end position="45"/>
    </location>
</feature>
<feature type="sequence variant" description="Possible variant of component I.">
    <original>S</original>
    <variation>T</variation>
    <location>
        <position position="6"/>
    </location>
</feature>
<feature type="sequence variant" description="In component II.">
    <original>A</original>
    <variation>T</variation>
    <location>
        <position position="12"/>
    </location>
</feature>
<feature type="sequence variant" description="Possible variant of component I.">
    <original>S</original>
    <variation>T</variation>
    <location>
        <position position="17"/>
    </location>
</feature>
<feature type="sequence variant" description="Possible variant of component I.">
    <original>S</original>
    <variation>T</variation>
    <location>
        <position position="18"/>
    </location>
</feature>
<feature type="sequence variant" description="In component III.">
    <original>K</original>
    <variation>R</variation>
    <location>
        <position position="39"/>
    </location>
</feature>